<feature type="chain" id="PRO_0000384226" description="Maintenance of mitochondrial morphology protein 1">
    <location>
        <begin position="1"/>
        <end position="486"/>
    </location>
</feature>
<feature type="topological domain" description="Lumenal" evidence="1">
    <location>
        <begin position="1"/>
        <end position="19"/>
    </location>
</feature>
<feature type="transmembrane region" description="Helical" evidence="1">
    <location>
        <begin position="20"/>
        <end position="40"/>
    </location>
</feature>
<feature type="topological domain" description="Cytoplasmic" evidence="1">
    <location>
        <begin position="41"/>
        <end position="486"/>
    </location>
</feature>
<feature type="domain" description="SMP-LTD" evidence="1">
    <location>
        <begin position="125"/>
        <end position="382"/>
    </location>
</feature>
<feature type="region of interest" description="Disordered" evidence="2">
    <location>
        <begin position="45"/>
        <end position="98"/>
    </location>
</feature>
<feature type="region of interest" description="Disordered" evidence="2">
    <location>
        <begin position="269"/>
        <end position="318"/>
    </location>
</feature>
<feature type="region of interest" description="Disordered" evidence="2">
    <location>
        <begin position="393"/>
        <end position="412"/>
    </location>
</feature>
<feature type="region of interest" description="Disordered" evidence="2">
    <location>
        <begin position="420"/>
        <end position="486"/>
    </location>
</feature>
<feature type="compositionally biased region" description="Basic residues" evidence="2">
    <location>
        <begin position="51"/>
        <end position="61"/>
    </location>
</feature>
<feature type="compositionally biased region" description="Basic and acidic residues" evidence="2">
    <location>
        <begin position="70"/>
        <end position="79"/>
    </location>
</feature>
<feature type="compositionally biased region" description="Polar residues" evidence="2">
    <location>
        <begin position="80"/>
        <end position="96"/>
    </location>
</feature>
<feature type="compositionally biased region" description="Polar residues" evidence="2">
    <location>
        <begin position="269"/>
        <end position="291"/>
    </location>
</feature>
<feature type="compositionally biased region" description="Polar residues" evidence="2">
    <location>
        <begin position="307"/>
        <end position="318"/>
    </location>
</feature>
<feature type="compositionally biased region" description="Polar residues" evidence="2">
    <location>
        <begin position="401"/>
        <end position="412"/>
    </location>
</feature>
<feature type="compositionally biased region" description="Basic and acidic residues" evidence="2">
    <location>
        <begin position="429"/>
        <end position="440"/>
    </location>
</feature>
<feature type="compositionally biased region" description="Basic and acidic residues" evidence="2">
    <location>
        <begin position="462"/>
        <end position="473"/>
    </location>
</feature>
<protein>
    <recommendedName>
        <fullName evidence="1">Maintenance of mitochondrial morphology protein 1</fullName>
    </recommendedName>
</protein>
<name>MMM1_COCIM</name>
<gene>
    <name evidence="1" type="primary">MMM1</name>
    <name type="ORF">CIMG_02681</name>
</gene>
<proteinExistence type="inferred from homology"/>
<evidence type="ECO:0000255" key="1">
    <source>
        <dbReference type="HAMAP-Rule" id="MF_03103"/>
    </source>
</evidence>
<evidence type="ECO:0000256" key="2">
    <source>
        <dbReference type="SAM" id="MobiDB-lite"/>
    </source>
</evidence>
<keyword id="KW-0256">Endoplasmic reticulum</keyword>
<keyword id="KW-0445">Lipid transport</keyword>
<keyword id="KW-0446">Lipid-binding</keyword>
<keyword id="KW-0472">Membrane</keyword>
<keyword id="KW-1185">Reference proteome</keyword>
<keyword id="KW-0812">Transmembrane</keyword>
<keyword id="KW-1133">Transmembrane helix</keyword>
<keyword id="KW-0813">Transport</keyword>
<organism>
    <name type="scientific">Coccidioides immitis (strain RS)</name>
    <name type="common">Valley fever fungus</name>
    <dbReference type="NCBI Taxonomy" id="246410"/>
    <lineage>
        <taxon>Eukaryota</taxon>
        <taxon>Fungi</taxon>
        <taxon>Dikarya</taxon>
        <taxon>Ascomycota</taxon>
        <taxon>Pezizomycotina</taxon>
        <taxon>Eurotiomycetes</taxon>
        <taxon>Eurotiomycetidae</taxon>
        <taxon>Onygenales</taxon>
        <taxon>Onygenaceae</taxon>
        <taxon>Coccidioides</taxon>
    </lineage>
</organism>
<comment type="function">
    <text evidence="1">Component of the ERMES/MDM complex, which serves as a molecular tether to connect the endoplasmic reticulum (ER) and mitochondria. Components of this complex are involved in the control of mitochondrial shape and protein biogenesis, and function in nonvesicular lipid trafficking between the ER and mitochondria. The MDM12-MMM1 subcomplex functions in the major beta-barrel assembly pathway that is responsible for biogenesis of all outer membrane beta-barrel proteins, and acts in a late step after the SAM complex. The MDM10-MDM12-MMM1 subcomplex further acts in the TOM40-specific pathway after the action of the MDM12-MMM1 complex. Essential for establishing and maintaining the structure of mitochondria and maintenance of mtDNA nucleoids.</text>
</comment>
<comment type="subunit">
    <text evidence="1">Homodimer. Component of the ER-mitochondria encounter structure (ERMES) or MDM complex, composed of MMM1, MDM10, MDM12 and MDM34. A MMM1 homodimer associates with one molecule of MDM12 on each side in a pairwise head-to-tail manner, and the SMP-LTD domains of MMM1 and MDM12 generate a continuous hydrophobic tunnel for phospholipid trafficking.</text>
</comment>
<comment type="subcellular location">
    <subcellularLocation>
        <location evidence="1">Endoplasmic reticulum membrane</location>
        <topology evidence="1">Single-pass type I membrane protein</topology>
    </subcellularLocation>
    <text evidence="1">The ERMES/MDM complex localizes to a few discrete foci (around 10 per single cell), that represent mitochondria-endoplasmic reticulum junctions. These foci are often found next to mtDNA nucleoids.</text>
</comment>
<comment type="domain">
    <text evidence="1">The SMP-LTD domain is a barrel-like domain that can bind various types of glycerophospholipids in its interior and mediate their transfer between two adjacent bilayers.</text>
</comment>
<comment type="similarity">
    <text evidence="1">Belongs to the MMM1 family.</text>
</comment>
<dbReference type="EMBL" id="GG704911">
    <property type="protein sequence ID" value="EAS37327.3"/>
    <property type="molecule type" value="Genomic_DNA"/>
</dbReference>
<dbReference type="RefSeq" id="XP_001248910.1">
    <property type="nucleotide sequence ID" value="XM_001248909.2"/>
</dbReference>
<dbReference type="SMR" id="Q1E432"/>
<dbReference type="FunCoup" id="Q1E432">
    <property type="interactions" value="67"/>
</dbReference>
<dbReference type="STRING" id="246410.Q1E432"/>
<dbReference type="GeneID" id="4566258"/>
<dbReference type="KEGG" id="cim:CIMG_02681"/>
<dbReference type="VEuPathDB" id="FungiDB:CIMG_02681"/>
<dbReference type="InParanoid" id="Q1E432"/>
<dbReference type="OMA" id="WSFTQGL"/>
<dbReference type="OrthoDB" id="5376138at2759"/>
<dbReference type="Proteomes" id="UP000001261">
    <property type="component" value="Unassembled WGS sequence"/>
</dbReference>
<dbReference type="GO" id="GO:0005789">
    <property type="term" value="C:endoplasmic reticulum membrane"/>
    <property type="evidence" value="ECO:0007669"/>
    <property type="project" value="UniProtKB-SubCell"/>
</dbReference>
<dbReference type="GO" id="GO:0032865">
    <property type="term" value="C:ERMES complex"/>
    <property type="evidence" value="ECO:0007669"/>
    <property type="project" value="UniProtKB-UniRule"/>
</dbReference>
<dbReference type="GO" id="GO:0008289">
    <property type="term" value="F:lipid binding"/>
    <property type="evidence" value="ECO:0007669"/>
    <property type="project" value="UniProtKB-KW"/>
</dbReference>
<dbReference type="GO" id="GO:0000002">
    <property type="term" value="P:mitochondrial genome maintenance"/>
    <property type="evidence" value="ECO:0007669"/>
    <property type="project" value="UniProtKB-UniRule"/>
</dbReference>
<dbReference type="GO" id="GO:1990456">
    <property type="term" value="P:mitochondrion-endoplasmic reticulum membrane tethering"/>
    <property type="evidence" value="ECO:0007669"/>
    <property type="project" value="TreeGrafter"/>
</dbReference>
<dbReference type="GO" id="GO:0015914">
    <property type="term" value="P:phospholipid transport"/>
    <property type="evidence" value="ECO:0007669"/>
    <property type="project" value="TreeGrafter"/>
</dbReference>
<dbReference type="GO" id="GO:0045040">
    <property type="term" value="P:protein insertion into mitochondrial outer membrane"/>
    <property type="evidence" value="ECO:0007669"/>
    <property type="project" value="UniProtKB-UniRule"/>
</dbReference>
<dbReference type="CDD" id="cd21671">
    <property type="entry name" value="SMP_Mmm1"/>
    <property type="match status" value="1"/>
</dbReference>
<dbReference type="HAMAP" id="MF_03103">
    <property type="entry name" value="Mmm1"/>
    <property type="match status" value="1"/>
</dbReference>
<dbReference type="InterPro" id="IPR027537">
    <property type="entry name" value="Mmm1"/>
</dbReference>
<dbReference type="InterPro" id="IPR019411">
    <property type="entry name" value="MMM1_dom"/>
</dbReference>
<dbReference type="InterPro" id="IPR031468">
    <property type="entry name" value="SMP_LBD"/>
</dbReference>
<dbReference type="PANTHER" id="PTHR13466:SF0">
    <property type="entry name" value="SMP-LTD DOMAIN-CONTAINING PROTEIN"/>
    <property type="match status" value="1"/>
</dbReference>
<dbReference type="PANTHER" id="PTHR13466">
    <property type="entry name" value="TEX2 PROTEIN-RELATED"/>
    <property type="match status" value="1"/>
</dbReference>
<dbReference type="Pfam" id="PF10296">
    <property type="entry name" value="MMM1"/>
    <property type="match status" value="1"/>
</dbReference>
<dbReference type="PROSITE" id="PS51847">
    <property type="entry name" value="SMP"/>
    <property type="match status" value="1"/>
</dbReference>
<reference key="1">
    <citation type="journal article" date="2009" name="Genome Res.">
        <title>Comparative genomic analyses of the human fungal pathogens Coccidioides and their relatives.</title>
        <authorList>
            <person name="Sharpton T.J."/>
            <person name="Stajich J.E."/>
            <person name="Rounsley S.D."/>
            <person name="Gardner M.J."/>
            <person name="Wortman J.R."/>
            <person name="Jordar V.S."/>
            <person name="Maiti R."/>
            <person name="Kodira C.D."/>
            <person name="Neafsey D.E."/>
            <person name="Zeng Q."/>
            <person name="Hung C.-Y."/>
            <person name="McMahan C."/>
            <person name="Muszewska A."/>
            <person name="Grynberg M."/>
            <person name="Mandel M.A."/>
            <person name="Kellner E.M."/>
            <person name="Barker B.M."/>
            <person name="Galgiani J.N."/>
            <person name="Orbach M.J."/>
            <person name="Kirkland T.N."/>
            <person name="Cole G.T."/>
            <person name="Henn M.R."/>
            <person name="Birren B.W."/>
            <person name="Taylor J.W."/>
        </authorList>
    </citation>
    <scope>NUCLEOTIDE SEQUENCE [LARGE SCALE GENOMIC DNA]</scope>
    <source>
        <strain>RS</strain>
    </source>
</reference>
<reference key="2">
    <citation type="journal article" date="2010" name="Genome Res.">
        <title>Population genomic sequencing of Coccidioides fungi reveals recent hybridization and transposon control.</title>
        <authorList>
            <person name="Neafsey D.E."/>
            <person name="Barker B.M."/>
            <person name="Sharpton T.J."/>
            <person name="Stajich J.E."/>
            <person name="Park D.J."/>
            <person name="Whiston E."/>
            <person name="Hung C.-Y."/>
            <person name="McMahan C."/>
            <person name="White J."/>
            <person name="Sykes S."/>
            <person name="Heiman D."/>
            <person name="Young S."/>
            <person name="Zeng Q."/>
            <person name="Abouelleil A."/>
            <person name="Aftuck L."/>
            <person name="Bessette D."/>
            <person name="Brown A."/>
            <person name="FitzGerald M."/>
            <person name="Lui A."/>
            <person name="Macdonald J.P."/>
            <person name="Priest M."/>
            <person name="Orbach M.J."/>
            <person name="Galgiani J.N."/>
            <person name="Kirkland T.N."/>
            <person name="Cole G.T."/>
            <person name="Birren B.W."/>
            <person name="Henn M.R."/>
            <person name="Taylor J.W."/>
            <person name="Rounsley S.D."/>
        </authorList>
    </citation>
    <scope>GENOME REANNOTATION</scope>
    <source>
        <strain>RS</strain>
    </source>
</reference>
<accession>Q1E432</accession>
<accession>J3KMA2</accession>
<sequence length="486" mass="52986">MSNDTSAQPAQSSLSFTQGLLVGQLSVVLLIGAFIKFFIFGEASPSSSRSQTRRTSPHKRSYSISGARDLGSRSLKEKPSSNVLRPVPSSSTNTRSILRKTYYSANPTNFTSKHGRHRPHHSTHQPESLDWFNVLIAQTIAQYRQTAYILKDSPTSSILESLATTLNNPEKKPSFIDDITVTDISLGEEFPIFSNCRVIAIDDPSSDGGRLQALMDVDLSDDNLSLAIETNLVLNYPKPYSAILPVALSVSVVRFSGTLCISFVPGTTQTSTHLATSPSNIDPTLQTNDYSGANRRGNRRQERTDTEQATQANNAGTTGIPKTSLAFSFLPDYRLDLSVRSLIGSRSRLQDVPKVAQLVEARVQAWFEERVVEPRVQVVALPGIWPRMGRTGVRGQEEQQEVGSSGNAGVSTANVSMLGARDAGAEGSHATRDADMEGLRYRRNASPGDETSGVRYSPQNQDSREQACRDDPFRIPGSLPDVVPVT</sequence>